<comment type="catalytic activity">
    <reaction evidence="1">
        <text>tRNA(Asn) + L-asparagine + ATP = L-asparaginyl-tRNA(Asn) + AMP + diphosphate + H(+)</text>
        <dbReference type="Rhea" id="RHEA:11180"/>
        <dbReference type="Rhea" id="RHEA-COMP:9659"/>
        <dbReference type="Rhea" id="RHEA-COMP:9674"/>
        <dbReference type="ChEBI" id="CHEBI:15378"/>
        <dbReference type="ChEBI" id="CHEBI:30616"/>
        <dbReference type="ChEBI" id="CHEBI:33019"/>
        <dbReference type="ChEBI" id="CHEBI:58048"/>
        <dbReference type="ChEBI" id="CHEBI:78442"/>
        <dbReference type="ChEBI" id="CHEBI:78515"/>
        <dbReference type="ChEBI" id="CHEBI:456215"/>
        <dbReference type="EC" id="6.1.1.22"/>
    </reaction>
</comment>
<comment type="subunit">
    <text evidence="1">Homodimer.</text>
</comment>
<comment type="subcellular location">
    <subcellularLocation>
        <location evidence="1">Cytoplasm</location>
    </subcellularLocation>
</comment>
<comment type="similarity">
    <text evidence="1">Belongs to the class-II aminoacyl-tRNA synthetase family.</text>
</comment>
<accession>Q1RDS7</accession>
<sequence length="466" mass="52570">MSVVPVADVLQGRVAVDSEVTVRGWVRTRRDSKAGISFLAVYDGSCFDPVQAVINNSLPNYNEDVLRLTTGCSVIVTGKVVASPGQGQQFEIQASKVEVAGWVEDPDTYPMAAKRHSIEYLREVAHLRPRTNLIGAVARVRHTLAQALHRFFNEQGFFWVSTPLITASDTEGAGEMFRVSTLDLENLPRNDQGKVDFDKDFFGKESFLTVSGQLNGETYACALSKIYTFGPTFRAENSNTSRHLAEFWMLEPEVAFANLNDIAGLAEAMLKYVFKAVLEERADDMKFFAERVDKDAVSRLERFIEADFAQVDYTDAVTILENCGRKFENPVYWGVDLSSEHERYLAEEHFKAPVVVKNYPKDIKAFYMRLNEDGKTVAAMDVLAPGIGEIIGGSQREERLDVLDERMLEMGLNKEDYWWYRDLRRYGTVPHSGFGLGFERLIAYVTGVQNVRDVIPFPRTPRNASF</sequence>
<name>SYN_ECOUT</name>
<proteinExistence type="inferred from homology"/>
<protein>
    <recommendedName>
        <fullName evidence="1">Asparagine--tRNA ligase</fullName>
        <ecNumber evidence="1">6.1.1.22</ecNumber>
    </recommendedName>
    <alternativeName>
        <fullName evidence="1">Asparaginyl-tRNA synthetase</fullName>
        <shortName evidence="1">AsnRS</shortName>
    </alternativeName>
</protein>
<keyword id="KW-0030">Aminoacyl-tRNA synthetase</keyword>
<keyword id="KW-0067">ATP-binding</keyword>
<keyword id="KW-0963">Cytoplasm</keyword>
<keyword id="KW-0436">Ligase</keyword>
<keyword id="KW-0547">Nucleotide-binding</keyword>
<keyword id="KW-0648">Protein biosynthesis</keyword>
<evidence type="ECO:0000255" key="1">
    <source>
        <dbReference type="HAMAP-Rule" id="MF_00534"/>
    </source>
</evidence>
<reference key="1">
    <citation type="journal article" date="2006" name="Proc. Natl. Acad. Sci. U.S.A.">
        <title>Identification of genes subject to positive selection in uropathogenic strains of Escherichia coli: a comparative genomics approach.</title>
        <authorList>
            <person name="Chen S.L."/>
            <person name="Hung C.-S."/>
            <person name="Xu J."/>
            <person name="Reigstad C.S."/>
            <person name="Magrini V."/>
            <person name="Sabo A."/>
            <person name="Blasiar D."/>
            <person name="Bieri T."/>
            <person name="Meyer R.R."/>
            <person name="Ozersky P."/>
            <person name="Armstrong J.R."/>
            <person name="Fulton R.S."/>
            <person name="Latreille J.P."/>
            <person name="Spieth J."/>
            <person name="Hooton T.M."/>
            <person name="Mardis E.R."/>
            <person name="Hultgren S.J."/>
            <person name="Gordon J.I."/>
        </authorList>
    </citation>
    <scope>NUCLEOTIDE SEQUENCE [LARGE SCALE GENOMIC DNA]</scope>
    <source>
        <strain>UTI89 / UPEC</strain>
    </source>
</reference>
<organism>
    <name type="scientific">Escherichia coli (strain UTI89 / UPEC)</name>
    <dbReference type="NCBI Taxonomy" id="364106"/>
    <lineage>
        <taxon>Bacteria</taxon>
        <taxon>Pseudomonadati</taxon>
        <taxon>Pseudomonadota</taxon>
        <taxon>Gammaproteobacteria</taxon>
        <taxon>Enterobacterales</taxon>
        <taxon>Enterobacteriaceae</taxon>
        <taxon>Escherichia</taxon>
    </lineage>
</organism>
<feature type="chain" id="PRO_1000051393" description="Asparagine--tRNA ligase">
    <location>
        <begin position="1"/>
        <end position="466"/>
    </location>
</feature>
<gene>
    <name evidence="1" type="primary">asnS</name>
    <name type="ordered locus">UTI89_C1002</name>
</gene>
<dbReference type="EC" id="6.1.1.22" evidence="1"/>
<dbReference type="EMBL" id="CP000243">
    <property type="protein sequence ID" value="ABE06487.1"/>
    <property type="molecule type" value="Genomic_DNA"/>
</dbReference>
<dbReference type="RefSeq" id="WP_000117881.1">
    <property type="nucleotide sequence ID" value="NZ_CP064825.1"/>
</dbReference>
<dbReference type="SMR" id="Q1RDS7"/>
<dbReference type="GeneID" id="93776484"/>
<dbReference type="KEGG" id="eci:UTI89_C1002"/>
<dbReference type="HOGENOM" id="CLU_004553_2_0_6"/>
<dbReference type="Proteomes" id="UP000001952">
    <property type="component" value="Chromosome"/>
</dbReference>
<dbReference type="GO" id="GO:0005737">
    <property type="term" value="C:cytoplasm"/>
    <property type="evidence" value="ECO:0007669"/>
    <property type="project" value="UniProtKB-SubCell"/>
</dbReference>
<dbReference type="GO" id="GO:0004816">
    <property type="term" value="F:asparagine-tRNA ligase activity"/>
    <property type="evidence" value="ECO:0007669"/>
    <property type="project" value="UniProtKB-UniRule"/>
</dbReference>
<dbReference type="GO" id="GO:0005524">
    <property type="term" value="F:ATP binding"/>
    <property type="evidence" value="ECO:0007669"/>
    <property type="project" value="UniProtKB-UniRule"/>
</dbReference>
<dbReference type="GO" id="GO:0003676">
    <property type="term" value="F:nucleic acid binding"/>
    <property type="evidence" value="ECO:0007669"/>
    <property type="project" value="InterPro"/>
</dbReference>
<dbReference type="GO" id="GO:0006421">
    <property type="term" value="P:asparaginyl-tRNA aminoacylation"/>
    <property type="evidence" value="ECO:0007669"/>
    <property type="project" value="UniProtKB-UniRule"/>
</dbReference>
<dbReference type="CDD" id="cd00776">
    <property type="entry name" value="AsxRS_core"/>
    <property type="match status" value="1"/>
</dbReference>
<dbReference type="CDD" id="cd04318">
    <property type="entry name" value="EcAsnRS_like_N"/>
    <property type="match status" value="1"/>
</dbReference>
<dbReference type="FunFam" id="2.40.50.140:FF:000116">
    <property type="entry name" value="Asparagine--tRNA ligase"/>
    <property type="match status" value="1"/>
</dbReference>
<dbReference type="FunFam" id="3.30.930.10:FF:000016">
    <property type="entry name" value="Asparagine--tRNA ligase"/>
    <property type="match status" value="1"/>
</dbReference>
<dbReference type="Gene3D" id="3.30.930.10">
    <property type="entry name" value="Bira Bifunctional Protein, Domain 2"/>
    <property type="match status" value="1"/>
</dbReference>
<dbReference type="Gene3D" id="2.40.50.140">
    <property type="entry name" value="Nucleic acid-binding proteins"/>
    <property type="match status" value="1"/>
</dbReference>
<dbReference type="HAMAP" id="MF_00534">
    <property type="entry name" value="Asn_tRNA_synth"/>
    <property type="match status" value="1"/>
</dbReference>
<dbReference type="InterPro" id="IPR004364">
    <property type="entry name" value="Aa-tRNA-synt_II"/>
</dbReference>
<dbReference type="InterPro" id="IPR006195">
    <property type="entry name" value="aa-tRNA-synth_II"/>
</dbReference>
<dbReference type="InterPro" id="IPR045864">
    <property type="entry name" value="aa-tRNA-synth_II/BPL/LPL"/>
</dbReference>
<dbReference type="InterPro" id="IPR004522">
    <property type="entry name" value="Asn-tRNA-ligase"/>
</dbReference>
<dbReference type="InterPro" id="IPR002312">
    <property type="entry name" value="Asp/Asn-tRNA-synth_IIb"/>
</dbReference>
<dbReference type="InterPro" id="IPR012340">
    <property type="entry name" value="NA-bd_OB-fold"/>
</dbReference>
<dbReference type="InterPro" id="IPR004365">
    <property type="entry name" value="NA-bd_OB_tRNA"/>
</dbReference>
<dbReference type="NCBIfam" id="TIGR00457">
    <property type="entry name" value="asnS"/>
    <property type="match status" value="1"/>
</dbReference>
<dbReference type="NCBIfam" id="NF003037">
    <property type="entry name" value="PRK03932.1"/>
    <property type="match status" value="1"/>
</dbReference>
<dbReference type="PANTHER" id="PTHR22594:SF34">
    <property type="entry name" value="ASPARAGINE--TRNA LIGASE, MITOCHONDRIAL-RELATED"/>
    <property type="match status" value="1"/>
</dbReference>
<dbReference type="PANTHER" id="PTHR22594">
    <property type="entry name" value="ASPARTYL/LYSYL-TRNA SYNTHETASE"/>
    <property type="match status" value="1"/>
</dbReference>
<dbReference type="Pfam" id="PF00152">
    <property type="entry name" value="tRNA-synt_2"/>
    <property type="match status" value="1"/>
</dbReference>
<dbReference type="Pfam" id="PF01336">
    <property type="entry name" value="tRNA_anti-codon"/>
    <property type="match status" value="1"/>
</dbReference>
<dbReference type="PRINTS" id="PR01042">
    <property type="entry name" value="TRNASYNTHASP"/>
</dbReference>
<dbReference type="SUPFAM" id="SSF55681">
    <property type="entry name" value="Class II aaRS and biotin synthetases"/>
    <property type="match status" value="1"/>
</dbReference>
<dbReference type="SUPFAM" id="SSF50249">
    <property type="entry name" value="Nucleic acid-binding proteins"/>
    <property type="match status" value="1"/>
</dbReference>
<dbReference type="PROSITE" id="PS50862">
    <property type="entry name" value="AA_TRNA_LIGASE_II"/>
    <property type="match status" value="1"/>
</dbReference>